<sequence length="306" mass="36173">MKFVSIISNSRMLFLFLLITAKSDRESCLYIFDENIRGVNITPTFVSTRAKGLFDLFIKKLRSRVALSFFLLKRKIKLEETIVYGADHLSHSLLFLKKCSFFLIEDGTENYHQKSYKRSWKNKLFSIPKFGMYKNVKRIYLTKRENVPDCIKSKVEYINIKDLWFKKTEEEKLEILYLLGIDMKKIQLLIGEPFILFTQPLSEDYILTENEKIELYKSIIDKYDASKLVIKPHPREKTDYSRIFPNVKVFDETYPSEVLDILEVKFSRVITLFSTAAFSYPKEKVDFYGTKIHPKLLAKFGNIEYE</sequence>
<proteinExistence type="predicted"/>
<feature type="chain" id="PRO_0000077966" description="Uncharacterized protein HI_0871">
    <location>
        <begin position="1"/>
        <end position="306"/>
    </location>
</feature>
<name>Y871_HAEIN</name>
<dbReference type="EMBL" id="L42023">
    <property type="protein sequence ID" value="AAC22537.1"/>
    <property type="molecule type" value="Genomic_DNA"/>
</dbReference>
<dbReference type="PIR" id="C64015">
    <property type="entry name" value="C64015"/>
</dbReference>
<dbReference type="RefSeq" id="NP_439032.1">
    <property type="nucleotide sequence ID" value="NC_000907.1"/>
</dbReference>
<dbReference type="STRING" id="71421.HI_0871"/>
<dbReference type="EnsemblBacteria" id="AAC22537">
    <property type="protein sequence ID" value="AAC22537"/>
    <property type="gene ID" value="HI_0871"/>
</dbReference>
<dbReference type="KEGG" id="hin:HI_0871"/>
<dbReference type="PATRIC" id="fig|71421.8.peg.912"/>
<dbReference type="eggNOG" id="ENOG5032UC7">
    <property type="taxonomic scope" value="Bacteria"/>
</dbReference>
<dbReference type="HOGENOM" id="CLU_071525_1_0_6"/>
<dbReference type="OrthoDB" id="88385at2"/>
<dbReference type="BioCyc" id="HINF71421:G1GJ1-911-MONOMER"/>
<dbReference type="Proteomes" id="UP000000579">
    <property type="component" value="Chromosome"/>
</dbReference>
<dbReference type="Gene3D" id="3.40.50.11110">
    <property type="entry name" value="Sialyltransferase, C-terminal GT-B Rossman nucleotide-binding domain"/>
    <property type="match status" value="1"/>
</dbReference>
<dbReference type="InterPro" id="IPR012477">
    <property type="entry name" value="Glyco_transf_52"/>
</dbReference>
<dbReference type="Pfam" id="PF07922">
    <property type="entry name" value="Glyco_transf_52"/>
    <property type="match status" value="1"/>
</dbReference>
<reference key="1">
    <citation type="journal article" date="1995" name="Science">
        <title>Whole-genome random sequencing and assembly of Haemophilus influenzae Rd.</title>
        <authorList>
            <person name="Fleischmann R.D."/>
            <person name="Adams M.D."/>
            <person name="White O."/>
            <person name="Clayton R.A."/>
            <person name="Kirkness E.F."/>
            <person name="Kerlavage A.R."/>
            <person name="Bult C.J."/>
            <person name="Tomb J.-F."/>
            <person name="Dougherty B.A."/>
            <person name="Merrick J.M."/>
            <person name="McKenney K."/>
            <person name="Sutton G.G."/>
            <person name="FitzHugh W."/>
            <person name="Fields C.A."/>
            <person name="Gocayne J.D."/>
            <person name="Scott J.D."/>
            <person name="Shirley R."/>
            <person name="Liu L.-I."/>
            <person name="Glodek A."/>
            <person name="Kelley J.M."/>
            <person name="Weidman J.F."/>
            <person name="Phillips C.A."/>
            <person name="Spriggs T."/>
            <person name="Hedblom E."/>
            <person name="Cotton M.D."/>
            <person name="Utterback T.R."/>
            <person name="Hanna M.C."/>
            <person name="Nguyen D.T."/>
            <person name="Saudek D.M."/>
            <person name="Brandon R.C."/>
            <person name="Fine L.D."/>
            <person name="Fritchman J.L."/>
            <person name="Fuhrmann J.L."/>
            <person name="Geoghagen N.S.M."/>
            <person name="Gnehm C.L."/>
            <person name="McDonald L.A."/>
            <person name="Small K.V."/>
            <person name="Fraser C.M."/>
            <person name="Smith H.O."/>
            <person name="Venter J.C."/>
        </authorList>
    </citation>
    <scope>NUCLEOTIDE SEQUENCE [LARGE SCALE GENOMIC DNA]</scope>
    <source>
        <strain>ATCC 51907 / DSM 11121 / KW20 / Rd</strain>
    </source>
</reference>
<protein>
    <recommendedName>
        <fullName>Uncharacterized protein HI_0871</fullName>
    </recommendedName>
</protein>
<organism>
    <name type="scientific">Haemophilus influenzae (strain ATCC 51907 / DSM 11121 / KW20 / Rd)</name>
    <dbReference type="NCBI Taxonomy" id="71421"/>
    <lineage>
        <taxon>Bacteria</taxon>
        <taxon>Pseudomonadati</taxon>
        <taxon>Pseudomonadota</taxon>
        <taxon>Gammaproteobacteria</taxon>
        <taxon>Pasteurellales</taxon>
        <taxon>Pasteurellaceae</taxon>
        <taxon>Haemophilus</taxon>
    </lineage>
</organism>
<accession>P44066</accession>
<keyword id="KW-1185">Reference proteome</keyword>
<gene>
    <name type="ordered locus">HI_0871</name>
</gene>